<accession>Q10PW9</accession>
<accession>Q6VEF2</accession>
<keyword id="KW-0472">Membrane</keyword>
<keyword id="KW-1185">Reference proteome</keyword>
<keyword id="KW-0762">Sugar transport</keyword>
<keyword id="KW-0769">Symport</keyword>
<keyword id="KW-0812">Transmembrane</keyword>
<keyword id="KW-1133">Transmembrane helix</keyword>
<keyword id="KW-0813">Transport</keyword>
<proteinExistence type="evidence at protein level"/>
<feature type="chain" id="PRO_0000441038" description="Sugar transport protein MST4">
    <location>
        <begin position="1"/>
        <end position="515"/>
    </location>
</feature>
<feature type="topological domain" description="Cytoplasmic" evidence="5">
    <location>
        <begin position="1"/>
        <end position="17"/>
    </location>
</feature>
<feature type="transmembrane region" description="Helical" evidence="1">
    <location>
        <begin position="18"/>
        <end position="38"/>
    </location>
</feature>
<feature type="topological domain" description="Extracellular" evidence="5">
    <location>
        <begin position="39"/>
        <end position="78"/>
    </location>
</feature>
<feature type="transmembrane region" description="Helical" evidence="1">
    <location>
        <begin position="79"/>
        <end position="99"/>
    </location>
</feature>
<feature type="topological domain" description="Cytoplasmic" evidence="5">
    <location>
        <begin position="100"/>
        <end position="108"/>
    </location>
</feature>
<feature type="transmembrane region" description="Helical" evidence="1">
    <location>
        <begin position="109"/>
        <end position="129"/>
    </location>
</feature>
<feature type="topological domain" description="Extracellular" evidence="5">
    <location>
        <begin position="130"/>
        <end position="138"/>
    </location>
</feature>
<feature type="transmembrane region" description="Helical" evidence="1">
    <location>
        <begin position="139"/>
        <end position="159"/>
    </location>
</feature>
<feature type="topological domain" description="Cytoplasmic" evidence="5">
    <location>
        <begin position="160"/>
        <end position="165"/>
    </location>
</feature>
<feature type="transmembrane region" description="Helical" evidence="1">
    <location>
        <begin position="166"/>
        <end position="186"/>
    </location>
</feature>
<feature type="topological domain" description="Extracellular" evidence="5">
    <location>
        <begin position="187"/>
        <end position="199"/>
    </location>
</feature>
<feature type="transmembrane region" description="Helical" evidence="1">
    <location>
        <begin position="200"/>
        <end position="220"/>
    </location>
</feature>
<feature type="topological domain" description="Cytoplasmic" evidence="5">
    <location>
        <begin position="221"/>
        <end position="280"/>
    </location>
</feature>
<feature type="transmembrane region" description="Helical" evidence="1">
    <location>
        <begin position="281"/>
        <end position="301"/>
    </location>
</feature>
<feature type="topological domain" description="Extracellular" evidence="5">
    <location>
        <begin position="302"/>
        <end position="315"/>
    </location>
</feature>
<feature type="transmembrane region" description="Helical" evidence="1">
    <location>
        <begin position="316"/>
        <end position="336"/>
    </location>
</feature>
<feature type="topological domain" description="Cytoplasmic" evidence="5">
    <location>
        <begin position="337"/>
        <end position="347"/>
    </location>
</feature>
<feature type="transmembrane region" description="Helical" evidence="1">
    <location>
        <begin position="348"/>
        <end position="368"/>
    </location>
</feature>
<feature type="topological domain" description="Extracellular" evidence="5">
    <location>
        <begin position="369"/>
        <end position="379"/>
    </location>
</feature>
<feature type="transmembrane region" description="Helical" evidence="1">
    <location>
        <begin position="380"/>
        <end position="400"/>
    </location>
</feature>
<feature type="topological domain" description="Cytoplasmic" evidence="5">
    <location>
        <begin position="401"/>
        <end position="422"/>
    </location>
</feature>
<feature type="transmembrane region" description="Helical" evidence="1">
    <location>
        <begin position="423"/>
        <end position="443"/>
    </location>
</feature>
<feature type="topological domain" description="Extracellular" evidence="5">
    <location>
        <begin position="444"/>
        <end position="448"/>
    </location>
</feature>
<feature type="transmembrane region" description="Helical" evidence="1">
    <location>
        <begin position="449"/>
        <end position="469"/>
    </location>
</feature>
<feature type="topological domain" description="Cytoplasmic" evidence="5">
    <location>
        <begin position="470"/>
        <end position="515"/>
    </location>
</feature>
<feature type="sequence conflict" description="In Ref. 1; AAQ24871." evidence="5" ref="1">
    <original>V</original>
    <variation>A</variation>
    <location>
        <position position="339"/>
    </location>
</feature>
<sequence>MAGGFSVSGSGVEFEAKITPIVIISCIMAATGGLMFGYDVGISGGVTSMDDFLREFFPTVLKKKHEDKESNYCKYDNQGLQLFTSSLYLAGLTATFFASYTTRRLGRRLTMLIAGVFFIVGVIFNGAAQNLAMLIVGRILLGCGVGFANQAVPLFLSEIAPTRIRGGLNILFQLNVTIGILFANLVNYGTAKIHPWGWRLSLSLAGIPAALLTLGALFVVDTPNSLIERGRLEEGKAVLRKIRGTDNVEPEFNEIVEASRVAQEVKHPFRNLLQRRNRPQLVIAVLLQIFQQFTGINAIMFYAPVLFNTLGFKTDASLYSAVITGAVNVLSTLVSVYSVDRVGRRMLLLEAGVQMFLSQVAIAVVLGIKVTDRSDNLGHGWAIMVVVMVCTFVSSFAWSWGPLGWLIPSETFPLETRSAGQSVTVCVNLLFTFVIAQAFLSMLCHLKYAIFAFFSAWVVVMSLFVLFFLPETKNIPIEEMTERVWKQHWFWKRFMDDADKHHVVPNGGKSNGATV</sequence>
<comment type="function">
    <text evidence="2 3 6">Mediates active uptake of hexoses by sugar:proton symport (Probable). Can transport glucose, fructose, mannose and galactose (PubMed:17874189, PubMed:18506478). Can transport xylose and ribose (PubMed:18506478).</text>
</comment>
<comment type="biophysicochemical properties">
    <kinetics>
        <KM evidence="3">209.2 uM for glucose</KM>
        <KM evidence="3">271.1 uM for fructose</KM>
        <KM evidence="3">102.4 uM for mannose</KM>
        <KM evidence="3">95 uM for galactose</KM>
        <KM evidence="3">142.4 uM for ribose</KM>
        <KM evidence="3">135.2 uM for xylose</KM>
    </kinetics>
</comment>
<comment type="subcellular location">
    <subcellularLocation>
        <location evidence="1">Membrane</location>
        <topology evidence="1">Multi-pass membrane protein</topology>
    </subcellularLocation>
</comment>
<comment type="tissue specificity">
    <text evidence="2">Expressed in roots, shoots, leaf blades, leaf sheaths, anthers, ovaries and embryos.</text>
</comment>
<comment type="induction">
    <text evidence="3">Induced by glucose, sucrose and salt stress.</text>
</comment>
<comment type="similarity">
    <text evidence="5">Belongs to the major facilitator superfamily. Sugar transporter (TC 2.A.1.1) family.</text>
</comment>
<evidence type="ECO:0000255" key="1"/>
<evidence type="ECO:0000269" key="2">
    <source>
    </source>
</evidence>
<evidence type="ECO:0000269" key="3">
    <source>
    </source>
</evidence>
<evidence type="ECO:0000303" key="4">
    <source>
    </source>
</evidence>
<evidence type="ECO:0000305" key="5"/>
<evidence type="ECO:0000305" key="6">
    <source>
    </source>
</evidence>
<evidence type="ECO:0000312" key="7">
    <source>
        <dbReference type="EMBL" id="ABF94668.1"/>
    </source>
</evidence>
<evidence type="ECO:0000312" key="8">
    <source>
        <dbReference type="EMBL" id="BAF11310.1"/>
    </source>
</evidence>
<name>MST4_ORYSJ</name>
<reference key="1">
    <citation type="journal article" date="2007" name="Plant Mol. Biol.">
        <title>Molecular cloning and expression analysis of a monosaccharide transporter gene OsMST4 from rice (Oryza sativa L.).</title>
        <authorList>
            <person name="Wang Y."/>
            <person name="Xu H."/>
            <person name="Wei X."/>
            <person name="Chai C."/>
            <person name="Xiao Y."/>
            <person name="Zhang Y."/>
            <person name="Chen B."/>
            <person name="Xiao G."/>
            <person name="Ouwerkerk P.B."/>
            <person name="Wang M."/>
            <person name="Zhu Z."/>
        </authorList>
    </citation>
    <scope>NUCLEOTIDE SEQUENCE [MRNA]</scope>
    <scope>FUNCTION</scope>
    <scope>TISSUE SPECIFICITY</scope>
</reference>
<reference key="2">
    <citation type="journal article" date="2005" name="Genome Res.">
        <title>Sequence, annotation, and analysis of synteny between rice chromosome 3 and diverged grass species.</title>
        <authorList>
            <consortium name="The rice chromosome 3 sequencing consortium"/>
            <person name="Buell C.R."/>
            <person name="Yuan Q."/>
            <person name="Ouyang S."/>
            <person name="Liu J."/>
            <person name="Zhu W."/>
            <person name="Wang A."/>
            <person name="Maiti R."/>
            <person name="Haas B."/>
            <person name="Wortman J."/>
            <person name="Pertea M."/>
            <person name="Jones K.M."/>
            <person name="Kim M."/>
            <person name="Overton L."/>
            <person name="Tsitrin T."/>
            <person name="Fadrosh D."/>
            <person name="Bera J."/>
            <person name="Weaver B."/>
            <person name="Jin S."/>
            <person name="Johri S."/>
            <person name="Reardon M."/>
            <person name="Webb K."/>
            <person name="Hill J."/>
            <person name="Moffat K."/>
            <person name="Tallon L."/>
            <person name="Van Aken S."/>
            <person name="Lewis M."/>
            <person name="Utterback T."/>
            <person name="Feldblyum T."/>
            <person name="Zismann V."/>
            <person name="Iobst S."/>
            <person name="Hsiao J."/>
            <person name="de Vazeille A.R."/>
            <person name="Salzberg S.L."/>
            <person name="White O."/>
            <person name="Fraser C.M."/>
            <person name="Yu Y."/>
            <person name="Kim H."/>
            <person name="Rambo T."/>
            <person name="Currie J."/>
            <person name="Collura K."/>
            <person name="Kernodle-Thompson S."/>
            <person name="Wei F."/>
            <person name="Kudrna K."/>
            <person name="Ammiraju J.S.S."/>
            <person name="Luo M."/>
            <person name="Goicoechea J.L."/>
            <person name="Wing R.A."/>
            <person name="Henry D."/>
            <person name="Oates R."/>
            <person name="Palmer M."/>
            <person name="Pries G."/>
            <person name="Saski C."/>
            <person name="Simmons J."/>
            <person name="Soderlund C."/>
            <person name="Nelson W."/>
            <person name="de la Bastide M."/>
            <person name="Spiegel L."/>
            <person name="Nascimento L."/>
            <person name="Huang E."/>
            <person name="Preston R."/>
            <person name="Zutavern T."/>
            <person name="Palmer L."/>
            <person name="O'Shaughnessy A."/>
            <person name="Dike S."/>
            <person name="McCombie W.R."/>
            <person name="Minx P."/>
            <person name="Cordum H."/>
            <person name="Wilson R."/>
            <person name="Jin W."/>
            <person name="Lee H.R."/>
            <person name="Jiang J."/>
            <person name="Jackson S."/>
        </authorList>
    </citation>
    <scope>NUCLEOTIDE SEQUENCE [LARGE SCALE GENOMIC DNA]</scope>
    <source>
        <strain>cv. Nipponbare</strain>
    </source>
</reference>
<reference key="3">
    <citation type="journal article" date="2005" name="Nature">
        <title>The map-based sequence of the rice genome.</title>
        <authorList>
            <consortium name="International rice genome sequencing project (IRGSP)"/>
        </authorList>
    </citation>
    <scope>NUCLEOTIDE SEQUENCE [LARGE SCALE GENOMIC DNA]</scope>
    <source>
        <strain>cv. Nipponbare</strain>
    </source>
</reference>
<reference key="4">
    <citation type="journal article" date="2008" name="Nucleic Acids Res.">
        <title>The rice annotation project database (RAP-DB): 2008 update.</title>
        <authorList>
            <consortium name="The rice annotation project (RAP)"/>
        </authorList>
    </citation>
    <scope>GENOME REANNOTATION</scope>
    <source>
        <strain>cv. Nipponbare</strain>
    </source>
</reference>
<reference key="5">
    <citation type="journal article" date="2013" name="Rice">
        <title>Improvement of the Oryza sativa Nipponbare reference genome using next generation sequence and optical map data.</title>
        <authorList>
            <person name="Kawahara Y."/>
            <person name="de la Bastide M."/>
            <person name="Hamilton J.P."/>
            <person name="Kanamori H."/>
            <person name="McCombie W.R."/>
            <person name="Ouyang S."/>
            <person name="Schwartz D.C."/>
            <person name="Tanaka T."/>
            <person name="Wu J."/>
            <person name="Zhou S."/>
            <person name="Childs K.L."/>
            <person name="Davidson R.M."/>
            <person name="Lin H."/>
            <person name="Quesada-Ocampo L."/>
            <person name="Vaillancourt B."/>
            <person name="Sakai H."/>
            <person name="Lee S.S."/>
            <person name="Kim J."/>
            <person name="Numa H."/>
            <person name="Itoh T."/>
            <person name="Buell C.R."/>
            <person name="Matsumoto T."/>
        </authorList>
    </citation>
    <scope>GENOME REANNOTATION</scope>
    <source>
        <strain>cv. Nipponbare</strain>
    </source>
</reference>
<reference key="6">
    <citation type="journal article" date="2003" name="Science">
        <title>Collection, mapping, and annotation of over 28,000 cDNA clones from japonica rice.</title>
        <authorList>
            <consortium name="The rice full-length cDNA consortium"/>
        </authorList>
    </citation>
    <scope>NUCLEOTIDE SEQUENCE [LARGE SCALE MRNA]</scope>
    <source>
        <strain>cv. Nipponbare</strain>
    </source>
</reference>
<reference key="7">
    <citation type="journal article" date="2008" name="Planta">
        <title>Molecular cloning, functional characterization and expression analysis of a novel monosaccharide transporter gene OsMST6 from rice (Oryza sativa L.).</title>
        <authorList>
            <person name="Wang Y."/>
            <person name="Xiao Y."/>
            <person name="Zhang Y."/>
            <person name="Chai C."/>
            <person name="Wei G."/>
            <person name="Wei X."/>
            <person name="Xu H."/>
            <person name="Wang M."/>
            <person name="Ouwerkerk P.B."/>
            <person name="Zhu Z."/>
        </authorList>
    </citation>
    <scope>FUNCTION</scope>
    <scope>BIOPHYSICOCHEMICAL PROPERTIES</scope>
    <scope>INDUCTION</scope>
</reference>
<protein>
    <recommendedName>
        <fullName evidence="5">Sugar transport protein MST4</fullName>
    </recommendedName>
    <alternativeName>
        <fullName evidence="4">Monosaccharide transporter 4</fullName>
        <shortName evidence="4">OsMST4</shortName>
    </alternativeName>
    <alternativeName>
        <fullName evidence="5">Sugar:proton symporter MST4</fullName>
    </alternativeName>
</protein>
<dbReference type="EMBL" id="AY342321">
    <property type="protein sequence ID" value="AAQ24871.1"/>
    <property type="molecule type" value="mRNA"/>
</dbReference>
<dbReference type="EMBL" id="DP000009">
    <property type="protein sequence ID" value="ABF94668.1"/>
    <property type="molecule type" value="Genomic_DNA"/>
</dbReference>
<dbReference type="EMBL" id="AP008209">
    <property type="protein sequence ID" value="BAF11310.1"/>
    <property type="molecule type" value="Genomic_DNA"/>
</dbReference>
<dbReference type="EMBL" id="AP014959">
    <property type="protein sequence ID" value="BAS82992.1"/>
    <property type="molecule type" value="Genomic_DNA"/>
</dbReference>
<dbReference type="EMBL" id="AK069202">
    <property type="protein sequence ID" value="BAG91313.1"/>
    <property type="molecule type" value="mRNA"/>
</dbReference>
<dbReference type="EMBL" id="AK099306">
    <property type="protein sequence ID" value="BAG94054.1"/>
    <property type="molecule type" value="mRNA"/>
</dbReference>
<dbReference type="SMR" id="Q10PW9"/>
<dbReference type="FunCoup" id="Q10PW9">
    <property type="interactions" value="227"/>
</dbReference>
<dbReference type="STRING" id="39947.Q10PW9"/>
<dbReference type="PaxDb" id="39947-Q10PW9"/>
<dbReference type="EnsemblPlants" id="Os03t0218400-01">
    <property type="protein sequence ID" value="Os03t0218400-01"/>
    <property type="gene ID" value="Os03g0218400"/>
</dbReference>
<dbReference type="GeneID" id="4332079"/>
<dbReference type="Gramene" id="Os03t0218400-01">
    <property type="protein sequence ID" value="Os03t0218400-01"/>
    <property type="gene ID" value="Os03g0218400"/>
</dbReference>
<dbReference type="KEGG" id="dosa:Os03g0218400"/>
<dbReference type="KEGG" id="osa:4332079"/>
<dbReference type="eggNOG" id="KOG0254">
    <property type="taxonomic scope" value="Eukaryota"/>
</dbReference>
<dbReference type="HOGENOM" id="CLU_001265_30_5_1"/>
<dbReference type="InParanoid" id="Q10PW9"/>
<dbReference type="OMA" id="VMVVFAC"/>
<dbReference type="OrthoDB" id="5296287at2759"/>
<dbReference type="Proteomes" id="UP000000763">
    <property type="component" value="Chromosome 3"/>
</dbReference>
<dbReference type="Proteomes" id="UP000059680">
    <property type="component" value="Chromosome 3"/>
</dbReference>
<dbReference type="GO" id="GO:0016020">
    <property type="term" value="C:membrane"/>
    <property type="evidence" value="ECO:0007669"/>
    <property type="project" value="UniProtKB-SubCell"/>
</dbReference>
<dbReference type="GO" id="GO:0015145">
    <property type="term" value="F:monosaccharide transmembrane transporter activity"/>
    <property type="evidence" value="ECO:0007669"/>
    <property type="project" value="InterPro"/>
</dbReference>
<dbReference type="GO" id="GO:0015293">
    <property type="term" value="F:symporter activity"/>
    <property type="evidence" value="ECO:0007669"/>
    <property type="project" value="UniProtKB-KW"/>
</dbReference>
<dbReference type="CDD" id="cd17361">
    <property type="entry name" value="MFS_STP"/>
    <property type="match status" value="1"/>
</dbReference>
<dbReference type="FunFam" id="1.20.1250.20:FF:000002">
    <property type="entry name" value="Sugar transport protein 13"/>
    <property type="match status" value="1"/>
</dbReference>
<dbReference type="Gene3D" id="1.20.1250.20">
    <property type="entry name" value="MFS general substrate transporter like domains"/>
    <property type="match status" value="1"/>
</dbReference>
<dbReference type="InterPro" id="IPR020846">
    <property type="entry name" value="MFS_dom"/>
</dbReference>
<dbReference type="InterPro" id="IPR044778">
    <property type="entry name" value="MFS_STP/MST-like_plant"/>
</dbReference>
<dbReference type="InterPro" id="IPR005828">
    <property type="entry name" value="MFS_sugar_transport-like"/>
</dbReference>
<dbReference type="InterPro" id="IPR036259">
    <property type="entry name" value="MFS_trans_sf"/>
</dbReference>
<dbReference type="InterPro" id="IPR045262">
    <property type="entry name" value="STP/PLT_plant"/>
</dbReference>
<dbReference type="InterPro" id="IPR003663">
    <property type="entry name" value="Sugar/inositol_transpt"/>
</dbReference>
<dbReference type="InterPro" id="IPR005829">
    <property type="entry name" value="Sugar_transporter_CS"/>
</dbReference>
<dbReference type="NCBIfam" id="TIGR00879">
    <property type="entry name" value="SP"/>
    <property type="match status" value="1"/>
</dbReference>
<dbReference type="PANTHER" id="PTHR23500:SF357">
    <property type="entry name" value="IP12678P"/>
    <property type="match status" value="1"/>
</dbReference>
<dbReference type="PANTHER" id="PTHR23500">
    <property type="entry name" value="SOLUTE CARRIER FAMILY 2, FACILITATED GLUCOSE TRANSPORTER"/>
    <property type="match status" value="1"/>
</dbReference>
<dbReference type="Pfam" id="PF00083">
    <property type="entry name" value="Sugar_tr"/>
    <property type="match status" value="1"/>
</dbReference>
<dbReference type="PRINTS" id="PR00171">
    <property type="entry name" value="SUGRTRNSPORT"/>
</dbReference>
<dbReference type="SUPFAM" id="SSF103473">
    <property type="entry name" value="MFS general substrate transporter"/>
    <property type="match status" value="1"/>
</dbReference>
<dbReference type="PROSITE" id="PS50850">
    <property type="entry name" value="MFS"/>
    <property type="match status" value="1"/>
</dbReference>
<dbReference type="PROSITE" id="PS00216">
    <property type="entry name" value="SUGAR_TRANSPORT_1"/>
    <property type="match status" value="1"/>
</dbReference>
<organism>
    <name type="scientific">Oryza sativa subsp. japonica</name>
    <name type="common">Rice</name>
    <dbReference type="NCBI Taxonomy" id="39947"/>
    <lineage>
        <taxon>Eukaryota</taxon>
        <taxon>Viridiplantae</taxon>
        <taxon>Streptophyta</taxon>
        <taxon>Embryophyta</taxon>
        <taxon>Tracheophyta</taxon>
        <taxon>Spermatophyta</taxon>
        <taxon>Magnoliopsida</taxon>
        <taxon>Liliopsida</taxon>
        <taxon>Poales</taxon>
        <taxon>Poaceae</taxon>
        <taxon>BOP clade</taxon>
        <taxon>Oryzoideae</taxon>
        <taxon>Oryzeae</taxon>
        <taxon>Oryzinae</taxon>
        <taxon>Oryza</taxon>
        <taxon>Oryza sativa</taxon>
    </lineage>
</organism>
<gene>
    <name evidence="4" type="primary">MST4</name>
    <name evidence="8" type="ordered locus">Os03g0218400</name>
    <name evidence="7" type="ordered locus">LOC_Os03g11900</name>
</gene>